<proteinExistence type="inferred from homology"/>
<sequence length="470" mass="50810">MTELPDNTRWQLWIVAFGFFMQSLDTTIVNTALPSMAKSLGESPLHMHMVVVSYVLTVAVMLPASGWLADKIGVRNIFFAAIVLFTLGSLFCALSGTLNQLVLARVLQGVGGAMMVPVGRLTVMKIVPRTQYMAAMTFVTLPGQIGPLLGPALGGVLVEYASWHWIFLINIPVGIVGAMATFMLMPNYTIETRRFDLPGFLLLAIGMAVLTLALDGSKSMGISPWTLAGLAAGGAAAILLYLFHAKKNSGALFSLRLFRTPTFSLGLLGSFAGRIGSGMLPFMTPVFLQIGLGFSPFHAGLMMIPMVLGSMGMKRIVVQIVNRFGYRRVLVATTLGLALVSLLFMSVALLGWYYLLPLVLLLQGMVNSARFSSMNTLTLKDLPDTLASSGNSLLSMIMQLSMSIGVTIAGMLLGMFGQQHIGIDSSATHHVFMYTWLCMAVIIALPAIIFARVPNDTQQNMVISRRKRSL</sequence>
<gene>
    <name evidence="1" type="primary">mdtD</name>
    <name type="ordered locus">SeD_A2475</name>
</gene>
<reference key="1">
    <citation type="journal article" date="2011" name="J. Bacteriol.">
        <title>Comparative genomics of 28 Salmonella enterica isolates: evidence for CRISPR-mediated adaptive sublineage evolution.</title>
        <authorList>
            <person name="Fricke W.F."/>
            <person name="Mammel M.K."/>
            <person name="McDermott P.F."/>
            <person name="Tartera C."/>
            <person name="White D.G."/>
            <person name="Leclerc J.E."/>
            <person name="Ravel J."/>
            <person name="Cebula T.A."/>
        </authorList>
    </citation>
    <scope>NUCLEOTIDE SEQUENCE [LARGE SCALE GENOMIC DNA]</scope>
    <source>
        <strain>CT_02021853</strain>
    </source>
</reference>
<organism>
    <name type="scientific">Salmonella dublin (strain CT_02021853)</name>
    <dbReference type="NCBI Taxonomy" id="439851"/>
    <lineage>
        <taxon>Bacteria</taxon>
        <taxon>Pseudomonadati</taxon>
        <taxon>Pseudomonadota</taxon>
        <taxon>Gammaproteobacteria</taxon>
        <taxon>Enterobacterales</taxon>
        <taxon>Enterobacteriaceae</taxon>
        <taxon>Salmonella</taxon>
    </lineage>
</organism>
<comment type="subcellular location">
    <subcellularLocation>
        <location evidence="1">Cell inner membrane</location>
        <topology evidence="1">Multi-pass membrane protein</topology>
    </subcellularLocation>
</comment>
<comment type="similarity">
    <text evidence="1">Belongs to the major facilitator superfamily. TCR/Tet family.</text>
</comment>
<dbReference type="EMBL" id="CP001144">
    <property type="protein sequence ID" value="ACH76841.1"/>
    <property type="molecule type" value="Genomic_DNA"/>
</dbReference>
<dbReference type="RefSeq" id="WP_000137826.1">
    <property type="nucleotide sequence ID" value="NC_011205.1"/>
</dbReference>
<dbReference type="SMR" id="B5FMU8"/>
<dbReference type="KEGG" id="sed:SeD_A2475"/>
<dbReference type="HOGENOM" id="CLU_000960_28_0_6"/>
<dbReference type="Proteomes" id="UP000008322">
    <property type="component" value="Chromosome"/>
</dbReference>
<dbReference type="GO" id="GO:0005886">
    <property type="term" value="C:plasma membrane"/>
    <property type="evidence" value="ECO:0007669"/>
    <property type="project" value="UniProtKB-SubCell"/>
</dbReference>
<dbReference type="GO" id="GO:0022857">
    <property type="term" value="F:transmembrane transporter activity"/>
    <property type="evidence" value="ECO:0007669"/>
    <property type="project" value="UniProtKB-UniRule"/>
</dbReference>
<dbReference type="CDD" id="cd17503">
    <property type="entry name" value="MFS_LmrB_MDR_like"/>
    <property type="match status" value="1"/>
</dbReference>
<dbReference type="FunFam" id="1.20.1250.20:FF:000021">
    <property type="entry name" value="Putative multidrug resistance protein MdtD"/>
    <property type="match status" value="1"/>
</dbReference>
<dbReference type="FunFam" id="1.20.1720.10:FF:000001">
    <property type="entry name" value="Putative multidrug resistance protein MdtD"/>
    <property type="match status" value="1"/>
</dbReference>
<dbReference type="Gene3D" id="1.20.1250.20">
    <property type="entry name" value="MFS general substrate transporter like domains"/>
    <property type="match status" value="1"/>
</dbReference>
<dbReference type="Gene3D" id="1.20.1720.10">
    <property type="entry name" value="Multidrug resistance protein D"/>
    <property type="match status" value="1"/>
</dbReference>
<dbReference type="HAMAP" id="MF_01577">
    <property type="entry name" value="MFS_MdtD"/>
    <property type="match status" value="1"/>
</dbReference>
<dbReference type="InterPro" id="IPR011701">
    <property type="entry name" value="MFS"/>
</dbReference>
<dbReference type="InterPro" id="IPR020846">
    <property type="entry name" value="MFS_dom"/>
</dbReference>
<dbReference type="InterPro" id="IPR036259">
    <property type="entry name" value="MFS_trans_sf"/>
</dbReference>
<dbReference type="InterPro" id="IPR023721">
    <property type="entry name" value="Multi-R_MdtD"/>
</dbReference>
<dbReference type="NCBIfam" id="NF007799">
    <property type="entry name" value="PRK10504.1"/>
    <property type="match status" value="1"/>
</dbReference>
<dbReference type="PANTHER" id="PTHR42718:SF46">
    <property type="entry name" value="BLR6921 PROTEIN"/>
    <property type="match status" value="1"/>
</dbReference>
<dbReference type="PANTHER" id="PTHR42718">
    <property type="entry name" value="MAJOR FACILITATOR SUPERFAMILY MULTIDRUG TRANSPORTER MFSC"/>
    <property type="match status" value="1"/>
</dbReference>
<dbReference type="Pfam" id="PF07690">
    <property type="entry name" value="MFS_1"/>
    <property type="match status" value="1"/>
</dbReference>
<dbReference type="PRINTS" id="PR01036">
    <property type="entry name" value="TCRTETB"/>
</dbReference>
<dbReference type="SUPFAM" id="SSF103473">
    <property type="entry name" value="MFS general substrate transporter"/>
    <property type="match status" value="1"/>
</dbReference>
<dbReference type="PROSITE" id="PS50850">
    <property type="entry name" value="MFS"/>
    <property type="match status" value="1"/>
</dbReference>
<protein>
    <recommendedName>
        <fullName evidence="1">Putative multidrug resistance protein MdtD</fullName>
    </recommendedName>
</protein>
<feature type="chain" id="PRO_0000365284" description="Putative multidrug resistance protein MdtD">
    <location>
        <begin position="1"/>
        <end position="470"/>
    </location>
</feature>
<feature type="topological domain" description="Periplasmic" evidence="1">
    <location>
        <begin position="1"/>
        <end position="11"/>
    </location>
</feature>
<feature type="transmembrane region" description="Helical" evidence="1">
    <location>
        <begin position="12"/>
        <end position="32"/>
    </location>
</feature>
<feature type="topological domain" description="Cytoplasmic" evidence="1">
    <location>
        <begin position="33"/>
        <end position="48"/>
    </location>
</feature>
<feature type="transmembrane region" description="Helical" evidence="1">
    <location>
        <begin position="49"/>
        <end position="69"/>
    </location>
</feature>
<feature type="topological domain" description="Periplasmic" evidence="1">
    <location>
        <begin position="70"/>
        <end position="76"/>
    </location>
</feature>
<feature type="transmembrane region" description="Helical" evidence="1">
    <location>
        <begin position="77"/>
        <end position="97"/>
    </location>
</feature>
<feature type="topological domain" description="Cytoplasmic" evidence="1">
    <location>
        <begin position="98"/>
        <end position="101"/>
    </location>
</feature>
<feature type="transmembrane region" description="Helical" evidence="1">
    <location>
        <begin position="102"/>
        <end position="124"/>
    </location>
</feature>
<feature type="topological domain" description="Periplasmic" evidence="1">
    <location>
        <begin position="125"/>
        <end position="137"/>
    </location>
</feature>
<feature type="transmembrane region" description="Helical" evidence="1">
    <location>
        <begin position="138"/>
        <end position="158"/>
    </location>
</feature>
<feature type="topological domain" description="Cytoplasmic" evidence="1">
    <location>
        <begin position="159"/>
        <end position="164"/>
    </location>
</feature>
<feature type="transmembrane region" description="Helical" evidence="1">
    <location>
        <begin position="165"/>
        <end position="185"/>
    </location>
</feature>
<feature type="topological domain" description="Periplasmic" evidence="1">
    <location>
        <begin position="186"/>
        <end position="196"/>
    </location>
</feature>
<feature type="transmembrane region" description="Helical" evidence="1">
    <location>
        <begin position="197"/>
        <end position="217"/>
    </location>
</feature>
<feature type="topological domain" description="Cytoplasmic" evidence="1">
    <location>
        <begin position="218"/>
        <end position="224"/>
    </location>
</feature>
<feature type="transmembrane region" description="Helical" evidence="1">
    <location>
        <begin position="225"/>
        <end position="245"/>
    </location>
</feature>
<feature type="topological domain" description="Periplasmic" evidence="1">
    <location>
        <begin position="246"/>
        <end position="262"/>
    </location>
</feature>
<feature type="transmembrane region" description="Helical" evidence="1">
    <location>
        <begin position="263"/>
        <end position="283"/>
    </location>
</feature>
<feature type="topological domain" description="Cytoplasmic" evidence="1">
    <location>
        <begin position="284"/>
        <end position="285"/>
    </location>
</feature>
<feature type="transmembrane region" description="Helical" evidence="1">
    <location>
        <begin position="286"/>
        <end position="306"/>
    </location>
</feature>
<feature type="topological domain" description="Periplasmic" evidence="1">
    <location>
        <begin position="307"/>
        <end position="341"/>
    </location>
</feature>
<feature type="transmembrane region" description="Helical" evidence="1">
    <location>
        <begin position="342"/>
        <end position="362"/>
    </location>
</feature>
<feature type="topological domain" description="Cytoplasmic" evidence="1">
    <location>
        <begin position="363"/>
        <end position="395"/>
    </location>
</feature>
<feature type="transmembrane region" description="Helical" evidence="1">
    <location>
        <begin position="396"/>
        <end position="416"/>
    </location>
</feature>
<feature type="topological domain" description="Periplasmic" evidence="1">
    <location>
        <begin position="417"/>
        <end position="430"/>
    </location>
</feature>
<feature type="transmembrane region" description="Helical" evidence="1">
    <location>
        <begin position="431"/>
        <end position="451"/>
    </location>
</feature>
<feature type="topological domain" description="Cytoplasmic" evidence="1">
    <location>
        <begin position="452"/>
        <end position="470"/>
    </location>
</feature>
<name>MDTD_SALDC</name>
<evidence type="ECO:0000255" key="1">
    <source>
        <dbReference type="HAMAP-Rule" id="MF_01577"/>
    </source>
</evidence>
<accession>B5FMU8</accession>
<keyword id="KW-0997">Cell inner membrane</keyword>
<keyword id="KW-1003">Cell membrane</keyword>
<keyword id="KW-0472">Membrane</keyword>
<keyword id="KW-0812">Transmembrane</keyword>
<keyword id="KW-1133">Transmembrane helix</keyword>
<keyword id="KW-0813">Transport</keyword>